<feature type="chain" id="PRO_1000187434" description="5'-methylthioadenosine/S-adenosylhomocysteine nucleosidase">
    <location>
        <begin position="1"/>
        <end position="231"/>
    </location>
</feature>
<feature type="active site" description="Proton acceptor" evidence="1">
    <location>
        <position position="12"/>
    </location>
</feature>
<feature type="active site" description="Proton donor" evidence="1">
    <location>
        <position position="198"/>
    </location>
</feature>
<feature type="binding site" evidence="1">
    <location>
        <position position="78"/>
    </location>
    <ligand>
        <name>substrate</name>
    </ligand>
</feature>
<feature type="binding site" evidence="1">
    <location>
        <position position="153"/>
    </location>
    <ligand>
        <name>substrate</name>
    </ligand>
</feature>
<feature type="binding site" evidence="1">
    <location>
        <begin position="174"/>
        <end position="175"/>
    </location>
    <ligand>
        <name>substrate</name>
    </ligand>
</feature>
<accession>B7VJ21</accession>
<reference key="1">
    <citation type="submission" date="2009-02" db="EMBL/GenBank/DDBJ databases">
        <title>Vibrio splendidus str. LGP32 complete genome.</title>
        <authorList>
            <person name="Mazel D."/>
            <person name="Le Roux F."/>
        </authorList>
    </citation>
    <scope>NUCLEOTIDE SEQUENCE [LARGE SCALE GENOMIC DNA]</scope>
    <source>
        <strain>LGP32</strain>
    </source>
</reference>
<dbReference type="EC" id="3.2.2.9" evidence="1"/>
<dbReference type="EMBL" id="FM954972">
    <property type="protein sequence ID" value="CAV17475.1"/>
    <property type="molecule type" value="Genomic_DNA"/>
</dbReference>
<dbReference type="SMR" id="B7VJ21"/>
<dbReference type="STRING" id="575788.VS_0468"/>
<dbReference type="KEGG" id="vsp:VS_0468"/>
<dbReference type="eggNOG" id="COG0775">
    <property type="taxonomic scope" value="Bacteria"/>
</dbReference>
<dbReference type="HOGENOM" id="CLU_031248_2_2_6"/>
<dbReference type="UniPathway" id="UPA00904">
    <property type="reaction ID" value="UER00871"/>
</dbReference>
<dbReference type="Proteomes" id="UP000009100">
    <property type="component" value="Chromosome 1"/>
</dbReference>
<dbReference type="GO" id="GO:0005829">
    <property type="term" value="C:cytosol"/>
    <property type="evidence" value="ECO:0007669"/>
    <property type="project" value="TreeGrafter"/>
</dbReference>
<dbReference type="GO" id="GO:0008782">
    <property type="term" value="F:adenosylhomocysteine nucleosidase activity"/>
    <property type="evidence" value="ECO:0007669"/>
    <property type="project" value="UniProtKB-UniRule"/>
</dbReference>
<dbReference type="GO" id="GO:0008930">
    <property type="term" value="F:methylthioadenosine nucleosidase activity"/>
    <property type="evidence" value="ECO:0007669"/>
    <property type="project" value="UniProtKB-UniRule"/>
</dbReference>
<dbReference type="GO" id="GO:0019509">
    <property type="term" value="P:L-methionine salvage from methylthioadenosine"/>
    <property type="evidence" value="ECO:0007669"/>
    <property type="project" value="UniProtKB-UniRule"/>
</dbReference>
<dbReference type="GO" id="GO:0019284">
    <property type="term" value="P:L-methionine salvage from S-adenosylmethionine"/>
    <property type="evidence" value="ECO:0007669"/>
    <property type="project" value="TreeGrafter"/>
</dbReference>
<dbReference type="GO" id="GO:0009164">
    <property type="term" value="P:nucleoside catabolic process"/>
    <property type="evidence" value="ECO:0007669"/>
    <property type="project" value="InterPro"/>
</dbReference>
<dbReference type="CDD" id="cd09008">
    <property type="entry name" value="MTAN"/>
    <property type="match status" value="1"/>
</dbReference>
<dbReference type="FunFam" id="3.40.50.1580:FF:000001">
    <property type="entry name" value="MTA/SAH nucleosidase family protein"/>
    <property type="match status" value="1"/>
</dbReference>
<dbReference type="Gene3D" id="3.40.50.1580">
    <property type="entry name" value="Nucleoside phosphorylase domain"/>
    <property type="match status" value="1"/>
</dbReference>
<dbReference type="HAMAP" id="MF_01684">
    <property type="entry name" value="Salvage_MtnN"/>
    <property type="match status" value="1"/>
</dbReference>
<dbReference type="InterPro" id="IPR010049">
    <property type="entry name" value="MTA_SAH_Nsdase"/>
</dbReference>
<dbReference type="InterPro" id="IPR000845">
    <property type="entry name" value="Nucleoside_phosphorylase_d"/>
</dbReference>
<dbReference type="InterPro" id="IPR035994">
    <property type="entry name" value="Nucleoside_phosphorylase_sf"/>
</dbReference>
<dbReference type="NCBIfam" id="TIGR01704">
    <property type="entry name" value="MTA_SAH-Nsdase"/>
    <property type="match status" value="1"/>
</dbReference>
<dbReference type="NCBIfam" id="NF004079">
    <property type="entry name" value="PRK05584.1"/>
    <property type="match status" value="1"/>
</dbReference>
<dbReference type="PANTHER" id="PTHR46832">
    <property type="entry name" value="5'-METHYLTHIOADENOSINE/S-ADENOSYLHOMOCYSTEINE NUCLEOSIDASE"/>
    <property type="match status" value="1"/>
</dbReference>
<dbReference type="PANTHER" id="PTHR46832:SF1">
    <property type="entry name" value="5'-METHYLTHIOADENOSINE_S-ADENOSYLHOMOCYSTEINE NUCLEOSIDASE"/>
    <property type="match status" value="1"/>
</dbReference>
<dbReference type="Pfam" id="PF01048">
    <property type="entry name" value="PNP_UDP_1"/>
    <property type="match status" value="1"/>
</dbReference>
<dbReference type="SUPFAM" id="SSF53167">
    <property type="entry name" value="Purine and uridine phosphorylases"/>
    <property type="match status" value="1"/>
</dbReference>
<protein>
    <recommendedName>
        <fullName evidence="1">5'-methylthioadenosine/S-adenosylhomocysteine nucleosidase</fullName>
        <shortName evidence="1">MTA/SAH nucleosidase</shortName>
        <shortName evidence="1">MTAN</shortName>
        <ecNumber evidence="1">3.2.2.9</ecNumber>
    </recommendedName>
    <alternativeName>
        <fullName evidence="1">5'-deoxyadenosine nucleosidase</fullName>
        <shortName evidence="1">DOA nucleosidase</shortName>
        <shortName evidence="1">dAdo nucleosidase</shortName>
    </alternativeName>
    <alternativeName>
        <fullName evidence="1">5'-methylthioadenosine nucleosidase</fullName>
        <shortName evidence="1">MTA nucleosidase</shortName>
    </alternativeName>
    <alternativeName>
        <fullName evidence="1">S-adenosylhomocysteine nucleosidase</fullName>
        <shortName evidence="1">AdoHcy nucleosidase</shortName>
        <shortName evidence="1">SAH nucleosidase</shortName>
        <shortName evidence="1">SRH nucleosidase</shortName>
    </alternativeName>
</protein>
<gene>
    <name evidence="1" type="primary">mtnN</name>
    <name type="ordered locus">VS_0468</name>
</gene>
<evidence type="ECO:0000255" key="1">
    <source>
        <dbReference type="HAMAP-Rule" id="MF_01684"/>
    </source>
</evidence>
<sequence length="231" mass="24466">MKIGIIGAMEQEVAILKAAISDITEVNKGGCTFFSGQLNGVDVVLLQSGIGKVAAAVGTSILLSEYQPDVVLNTGSAGGFDSTLNLGDVVISTEVRHHDADVTAFGYEIGQMAGQPAAFKADDKLMAVAEQALAQMEDKHAVRGLICTGDAFVCTAERQEFIRKHFPSVVAVEMEASAIAQACHQFQVPFVVVRAISDVADKESPMSFEEFLPLAAQSSSEMVIKMVALLK</sequence>
<name>MTNN_VIBA3</name>
<organism>
    <name type="scientific">Vibrio atlanticus (strain LGP32)</name>
    <name type="common">Vibrio splendidus (strain Mel32)</name>
    <dbReference type="NCBI Taxonomy" id="575788"/>
    <lineage>
        <taxon>Bacteria</taxon>
        <taxon>Pseudomonadati</taxon>
        <taxon>Pseudomonadota</taxon>
        <taxon>Gammaproteobacteria</taxon>
        <taxon>Vibrionales</taxon>
        <taxon>Vibrionaceae</taxon>
        <taxon>Vibrio</taxon>
    </lineage>
</organism>
<proteinExistence type="inferred from homology"/>
<comment type="function">
    <text evidence="1">Catalyzes the irreversible cleavage of the glycosidic bond in both 5'-methylthioadenosine (MTA) and S-adenosylhomocysteine (SAH/AdoHcy) to adenine and the corresponding thioribose, 5'-methylthioribose and S-ribosylhomocysteine, respectively. Also cleaves 5'-deoxyadenosine, a toxic by-product of radical S-adenosylmethionine (SAM) enzymes, into 5-deoxyribose and adenine.</text>
</comment>
<comment type="catalytic activity">
    <reaction evidence="1">
        <text>S-adenosyl-L-homocysteine + H2O = S-(5-deoxy-D-ribos-5-yl)-L-homocysteine + adenine</text>
        <dbReference type="Rhea" id="RHEA:17805"/>
        <dbReference type="ChEBI" id="CHEBI:15377"/>
        <dbReference type="ChEBI" id="CHEBI:16708"/>
        <dbReference type="ChEBI" id="CHEBI:57856"/>
        <dbReference type="ChEBI" id="CHEBI:58195"/>
        <dbReference type="EC" id="3.2.2.9"/>
    </reaction>
</comment>
<comment type="catalytic activity">
    <reaction evidence="1">
        <text>S-methyl-5'-thioadenosine + H2O = 5-(methylsulfanyl)-D-ribose + adenine</text>
        <dbReference type="Rhea" id="RHEA:13617"/>
        <dbReference type="ChEBI" id="CHEBI:15377"/>
        <dbReference type="ChEBI" id="CHEBI:16708"/>
        <dbReference type="ChEBI" id="CHEBI:17509"/>
        <dbReference type="ChEBI" id="CHEBI:78440"/>
        <dbReference type="EC" id="3.2.2.9"/>
    </reaction>
</comment>
<comment type="catalytic activity">
    <reaction evidence="1">
        <text>5'-deoxyadenosine + H2O = 5-deoxy-D-ribose + adenine</text>
        <dbReference type="Rhea" id="RHEA:29859"/>
        <dbReference type="ChEBI" id="CHEBI:15377"/>
        <dbReference type="ChEBI" id="CHEBI:16708"/>
        <dbReference type="ChEBI" id="CHEBI:17319"/>
        <dbReference type="ChEBI" id="CHEBI:149540"/>
        <dbReference type="EC" id="3.2.2.9"/>
    </reaction>
    <physiologicalReaction direction="left-to-right" evidence="1">
        <dbReference type="Rhea" id="RHEA:29860"/>
    </physiologicalReaction>
</comment>
<comment type="pathway">
    <text evidence="1">Amino-acid biosynthesis; L-methionine biosynthesis via salvage pathway; S-methyl-5-thio-alpha-D-ribose 1-phosphate from S-methyl-5'-thioadenosine (hydrolase route): step 1/2.</text>
</comment>
<comment type="similarity">
    <text evidence="1">Belongs to the PNP/UDP phosphorylase family. MtnN subfamily.</text>
</comment>
<keyword id="KW-0028">Amino-acid biosynthesis</keyword>
<keyword id="KW-0378">Hydrolase</keyword>
<keyword id="KW-0486">Methionine biosynthesis</keyword>